<comment type="function">
    <text evidence="1">Catalyzes the oxidation of 5,10-methylenetetrahydrofolate to 5,10-methenyltetrahydrofolate and then the hydrolysis of 5,10-methenyltetrahydrofolate to 10-formyltetrahydrofolate.</text>
</comment>
<comment type="catalytic activity">
    <reaction evidence="1">
        <text>(6R)-5,10-methylene-5,6,7,8-tetrahydrofolate + NADP(+) = (6R)-5,10-methenyltetrahydrofolate + NADPH</text>
        <dbReference type="Rhea" id="RHEA:22812"/>
        <dbReference type="ChEBI" id="CHEBI:15636"/>
        <dbReference type="ChEBI" id="CHEBI:57455"/>
        <dbReference type="ChEBI" id="CHEBI:57783"/>
        <dbReference type="ChEBI" id="CHEBI:58349"/>
        <dbReference type="EC" id="1.5.1.5"/>
    </reaction>
</comment>
<comment type="catalytic activity">
    <reaction evidence="1">
        <text>(6R)-5,10-methenyltetrahydrofolate + H2O = (6R)-10-formyltetrahydrofolate + H(+)</text>
        <dbReference type="Rhea" id="RHEA:23700"/>
        <dbReference type="ChEBI" id="CHEBI:15377"/>
        <dbReference type="ChEBI" id="CHEBI:15378"/>
        <dbReference type="ChEBI" id="CHEBI:57455"/>
        <dbReference type="ChEBI" id="CHEBI:195366"/>
        <dbReference type="EC" id="3.5.4.9"/>
    </reaction>
</comment>
<comment type="pathway">
    <text evidence="1">One-carbon metabolism; tetrahydrofolate interconversion.</text>
</comment>
<comment type="subunit">
    <text evidence="1">Homodimer.</text>
</comment>
<comment type="similarity">
    <text evidence="1">Belongs to the tetrahydrofolate dehydrogenase/cyclohydrolase family.</text>
</comment>
<dbReference type="EC" id="1.5.1.5" evidence="1"/>
<dbReference type="EC" id="3.5.4.9" evidence="1"/>
<dbReference type="EMBL" id="CP000095">
    <property type="protein sequence ID" value="AAZ58173.1"/>
    <property type="molecule type" value="Genomic_DNA"/>
</dbReference>
<dbReference type="RefSeq" id="WP_011294771.1">
    <property type="nucleotide sequence ID" value="NC_007335.2"/>
</dbReference>
<dbReference type="SMR" id="Q46K05"/>
<dbReference type="STRING" id="59920.PMN2A_0682"/>
<dbReference type="KEGG" id="pmn:PMN2A_0682"/>
<dbReference type="HOGENOM" id="CLU_034045_2_1_3"/>
<dbReference type="OrthoDB" id="9803580at2"/>
<dbReference type="PhylomeDB" id="Q46K05"/>
<dbReference type="UniPathway" id="UPA00193"/>
<dbReference type="Proteomes" id="UP000002535">
    <property type="component" value="Chromosome"/>
</dbReference>
<dbReference type="GO" id="GO:0005829">
    <property type="term" value="C:cytosol"/>
    <property type="evidence" value="ECO:0007669"/>
    <property type="project" value="TreeGrafter"/>
</dbReference>
<dbReference type="GO" id="GO:0004477">
    <property type="term" value="F:methenyltetrahydrofolate cyclohydrolase activity"/>
    <property type="evidence" value="ECO:0007669"/>
    <property type="project" value="UniProtKB-UniRule"/>
</dbReference>
<dbReference type="GO" id="GO:0004488">
    <property type="term" value="F:methylenetetrahydrofolate dehydrogenase (NADP+) activity"/>
    <property type="evidence" value="ECO:0007669"/>
    <property type="project" value="UniProtKB-UniRule"/>
</dbReference>
<dbReference type="GO" id="GO:0000105">
    <property type="term" value="P:L-histidine biosynthetic process"/>
    <property type="evidence" value="ECO:0007669"/>
    <property type="project" value="UniProtKB-KW"/>
</dbReference>
<dbReference type="GO" id="GO:0009086">
    <property type="term" value="P:methionine biosynthetic process"/>
    <property type="evidence" value="ECO:0007669"/>
    <property type="project" value="UniProtKB-KW"/>
</dbReference>
<dbReference type="GO" id="GO:0006164">
    <property type="term" value="P:purine nucleotide biosynthetic process"/>
    <property type="evidence" value="ECO:0007669"/>
    <property type="project" value="UniProtKB-KW"/>
</dbReference>
<dbReference type="GO" id="GO:0035999">
    <property type="term" value="P:tetrahydrofolate interconversion"/>
    <property type="evidence" value="ECO:0007669"/>
    <property type="project" value="UniProtKB-UniRule"/>
</dbReference>
<dbReference type="CDD" id="cd01080">
    <property type="entry name" value="NAD_bind_m-THF_DH_Cyclohyd"/>
    <property type="match status" value="1"/>
</dbReference>
<dbReference type="FunFam" id="3.40.50.720:FF:000006">
    <property type="entry name" value="Bifunctional protein FolD"/>
    <property type="match status" value="1"/>
</dbReference>
<dbReference type="FunFam" id="3.40.50.10860:FF:000005">
    <property type="entry name" value="C-1-tetrahydrofolate synthase, cytoplasmic, putative"/>
    <property type="match status" value="1"/>
</dbReference>
<dbReference type="Gene3D" id="3.40.50.10860">
    <property type="entry name" value="Leucine Dehydrogenase, chain A, domain 1"/>
    <property type="match status" value="1"/>
</dbReference>
<dbReference type="Gene3D" id="3.40.50.720">
    <property type="entry name" value="NAD(P)-binding Rossmann-like Domain"/>
    <property type="match status" value="1"/>
</dbReference>
<dbReference type="HAMAP" id="MF_01576">
    <property type="entry name" value="THF_DHG_CYH"/>
    <property type="match status" value="1"/>
</dbReference>
<dbReference type="InterPro" id="IPR046346">
    <property type="entry name" value="Aminoacid_DH-like_N_sf"/>
</dbReference>
<dbReference type="InterPro" id="IPR036291">
    <property type="entry name" value="NAD(P)-bd_dom_sf"/>
</dbReference>
<dbReference type="InterPro" id="IPR000672">
    <property type="entry name" value="THF_DH/CycHdrlase"/>
</dbReference>
<dbReference type="InterPro" id="IPR020630">
    <property type="entry name" value="THF_DH/CycHdrlase_cat_dom"/>
</dbReference>
<dbReference type="InterPro" id="IPR020867">
    <property type="entry name" value="THF_DH/CycHdrlase_CS"/>
</dbReference>
<dbReference type="InterPro" id="IPR020631">
    <property type="entry name" value="THF_DH/CycHdrlase_NAD-bd_dom"/>
</dbReference>
<dbReference type="NCBIfam" id="NF010783">
    <property type="entry name" value="PRK14186.1"/>
    <property type="match status" value="1"/>
</dbReference>
<dbReference type="PANTHER" id="PTHR48099:SF5">
    <property type="entry name" value="C-1-TETRAHYDROFOLATE SYNTHASE, CYTOPLASMIC"/>
    <property type="match status" value="1"/>
</dbReference>
<dbReference type="PANTHER" id="PTHR48099">
    <property type="entry name" value="C-1-TETRAHYDROFOLATE SYNTHASE, CYTOPLASMIC-RELATED"/>
    <property type="match status" value="1"/>
</dbReference>
<dbReference type="Pfam" id="PF00763">
    <property type="entry name" value="THF_DHG_CYH"/>
    <property type="match status" value="1"/>
</dbReference>
<dbReference type="Pfam" id="PF02882">
    <property type="entry name" value="THF_DHG_CYH_C"/>
    <property type="match status" value="1"/>
</dbReference>
<dbReference type="PRINTS" id="PR00085">
    <property type="entry name" value="THFDHDRGNASE"/>
</dbReference>
<dbReference type="SUPFAM" id="SSF53223">
    <property type="entry name" value="Aminoacid dehydrogenase-like, N-terminal domain"/>
    <property type="match status" value="1"/>
</dbReference>
<dbReference type="SUPFAM" id="SSF51735">
    <property type="entry name" value="NAD(P)-binding Rossmann-fold domains"/>
    <property type="match status" value="1"/>
</dbReference>
<dbReference type="PROSITE" id="PS00767">
    <property type="entry name" value="THF_DHG_CYH_2"/>
    <property type="match status" value="1"/>
</dbReference>
<evidence type="ECO:0000255" key="1">
    <source>
        <dbReference type="HAMAP-Rule" id="MF_01576"/>
    </source>
</evidence>
<gene>
    <name evidence="1" type="primary">folD</name>
    <name type="ordered locus">PMN2A_0682</name>
</gene>
<feature type="chain" id="PRO_0000268437" description="Bifunctional protein FolD">
    <location>
        <begin position="1"/>
        <end position="303"/>
    </location>
</feature>
<feature type="binding site" evidence="1">
    <location>
        <begin position="165"/>
        <end position="167"/>
    </location>
    <ligand>
        <name>NADP(+)</name>
        <dbReference type="ChEBI" id="CHEBI:58349"/>
    </ligand>
</feature>
<feature type="binding site" evidence="1">
    <location>
        <position position="190"/>
    </location>
    <ligand>
        <name>NADP(+)</name>
        <dbReference type="ChEBI" id="CHEBI:58349"/>
    </ligand>
</feature>
<feature type="binding site" evidence="1">
    <location>
        <position position="231"/>
    </location>
    <ligand>
        <name>NADP(+)</name>
        <dbReference type="ChEBI" id="CHEBI:58349"/>
    </ligand>
</feature>
<accession>Q46K05</accession>
<name>FOLD_PROMT</name>
<sequence length="303" mass="32989">MPKILDGKKLAQEIELILQQAIESGLEVAKRRPGLAVLRVGDDPASGVYVNYKEKACDRIGVRSFAKHLKEDISLEELTEIIKSLNEEKNVDGILLQLPLPSHLDETALLRSIDPDKDADGLHPLNLGRLIKGEKGPRSCTPAGVMSLLERNQIKIEGKRAVVVGRSILVGKPMALMLEAANATVTIAHSKTKDLPSLTKEADLLVVAAGKPYLIGENHVSENCVVIDVGIHRLPPDEENMKELKKTKLCGDVKIFEIEDKVAAYSPVPGGVGPMTVTMLLANTVDRWQKHCGLPLTISHLLP</sequence>
<keyword id="KW-0028">Amino-acid biosynthesis</keyword>
<keyword id="KW-0368">Histidine biosynthesis</keyword>
<keyword id="KW-0378">Hydrolase</keyword>
<keyword id="KW-0486">Methionine biosynthesis</keyword>
<keyword id="KW-0511">Multifunctional enzyme</keyword>
<keyword id="KW-0521">NADP</keyword>
<keyword id="KW-0554">One-carbon metabolism</keyword>
<keyword id="KW-0560">Oxidoreductase</keyword>
<keyword id="KW-0658">Purine biosynthesis</keyword>
<keyword id="KW-1185">Reference proteome</keyword>
<protein>
    <recommendedName>
        <fullName evidence="1">Bifunctional protein FolD</fullName>
    </recommendedName>
    <domain>
        <recommendedName>
            <fullName evidence="1">Methylenetetrahydrofolate dehydrogenase</fullName>
            <ecNumber evidence="1">1.5.1.5</ecNumber>
        </recommendedName>
    </domain>
    <domain>
        <recommendedName>
            <fullName evidence="1">Methenyltetrahydrofolate cyclohydrolase</fullName>
            <ecNumber evidence="1">3.5.4.9</ecNumber>
        </recommendedName>
    </domain>
</protein>
<reference key="1">
    <citation type="journal article" date="2007" name="PLoS Genet.">
        <title>Patterns and implications of gene gain and loss in the evolution of Prochlorococcus.</title>
        <authorList>
            <person name="Kettler G.C."/>
            <person name="Martiny A.C."/>
            <person name="Huang K."/>
            <person name="Zucker J."/>
            <person name="Coleman M.L."/>
            <person name="Rodrigue S."/>
            <person name="Chen F."/>
            <person name="Lapidus A."/>
            <person name="Ferriera S."/>
            <person name="Johnson J."/>
            <person name="Steglich C."/>
            <person name="Church G.M."/>
            <person name="Richardson P."/>
            <person name="Chisholm S.W."/>
        </authorList>
    </citation>
    <scope>NUCLEOTIDE SEQUENCE [LARGE SCALE GENOMIC DNA]</scope>
    <source>
        <strain>NATL2A</strain>
    </source>
</reference>
<proteinExistence type="inferred from homology"/>
<organism>
    <name type="scientific">Prochlorococcus marinus (strain NATL2A)</name>
    <dbReference type="NCBI Taxonomy" id="59920"/>
    <lineage>
        <taxon>Bacteria</taxon>
        <taxon>Bacillati</taxon>
        <taxon>Cyanobacteriota</taxon>
        <taxon>Cyanophyceae</taxon>
        <taxon>Synechococcales</taxon>
        <taxon>Prochlorococcaceae</taxon>
        <taxon>Prochlorococcus</taxon>
    </lineage>
</organism>